<gene>
    <name evidence="5" type="primary">RVE6</name>
    <name evidence="9" type="ordered locus">At5g52660</name>
    <name evidence="10" type="ORF">F6N7.15</name>
</gene>
<feature type="chain" id="PRO_0000424839" description="Protein REVEILLE 6">
    <location>
        <begin position="1"/>
        <end position="331"/>
    </location>
</feature>
<feature type="domain" description="HTH myb-type" evidence="2">
    <location>
        <begin position="67"/>
        <end position="121"/>
    </location>
</feature>
<feature type="DNA-binding region" description="H-T-H motif" evidence="2">
    <location>
        <begin position="94"/>
        <end position="117"/>
    </location>
</feature>
<feature type="region of interest" description="Disordered" evidence="3">
    <location>
        <begin position="122"/>
        <end position="166"/>
    </location>
</feature>
<feature type="region of interest" description="Disordered" evidence="3">
    <location>
        <begin position="203"/>
        <end position="237"/>
    </location>
</feature>
<feature type="region of interest" description="Disordered" evidence="3">
    <location>
        <begin position="309"/>
        <end position="331"/>
    </location>
</feature>
<feature type="compositionally biased region" description="Polar residues" evidence="3">
    <location>
        <begin position="150"/>
        <end position="165"/>
    </location>
</feature>
<feature type="compositionally biased region" description="Low complexity" evidence="3">
    <location>
        <begin position="211"/>
        <end position="220"/>
    </location>
</feature>
<feature type="compositionally biased region" description="Basic and acidic residues" evidence="3">
    <location>
        <begin position="226"/>
        <end position="235"/>
    </location>
</feature>
<feature type="compositionally biased region" description="Basic and acidic residues" evidence="3">
    <location>
        <begin position="322"/>
        <end position="331"/>
    </location>
</feature>
<feature type="splice variant" id="VSP_053510" description="In isoform 2." evidence="6 7">
    <location>
        <position position="206"/>
    </location>
</feature>
<name>RVE6_ARATH</name>
<proteinExistence type="evidence at transcript level"/>
<organism>
    <name type="scientific">Arabidopsis thaliana</name>
    <name type="common">Mouse-ear cress</name>
    <dbReference type="NCBI Taxonomy" id="3702"/>
    <lineage>
        <taxon>Eukaryota</taxon>
        <taxon>Viridiplantae</taxon>
        <taxon>Streptophyta</taxon>
        <taxon>Embryophyta</taxon>
        <taxon>Tracheophyta</taxon>
        <taxon>Spermatophyta</taxon>
        <taxon>Magnoliopsida</taxon>
        <taxon>eudicotyledons</taxon>
        <taxon>Gunneridae</taxon>
        <taxon>Pentapetalae</taxon>
        <taxon>rosids</taxon>
        <taxon>malvids</taxon>
        <taxon>Brassicales</taxon>
        <taxon>Brassicaceae</taxon>
        <taxon>Camelineae</taxon>
        <taxon>Arabidopsis</taxon>
    </lineage>
</organism>
<protein>
    <recommendedName>
        <fullName>Protein REVEILLE 6</fullName>
    </recommendedName>
</protein>
<sequence>MVSRNSDGYFLDPTGMTVPGLGPSFTAAVSSSSSPTTSSTAVAVADVTAMVSSSEEDLSKKIRKPYTITKSRESWTEPEHDKFLEALQLFDRDWKKIEAFIGSKTVIQIRSHAQKYFLKVQKSGTGEHLPPPRPKRKAAHPYPQKAHKNVQLQVPGSFKSTSEPNDPSFMFRPESSSMLMTSPTTAAAAPWTNNAQTISFTPLPKAGAGANNNCSSSSENTPRPRSNRDARDHGNVGHSLRVLPDFAQVYGFIGSVFDPYASNHLQKLKKMDPIDVETVLLLMRNLSINLSSPDFEDHRRLLSSYDIGSETATDHGGVNKTLNKDPPEIST</sequence>
<reference key="1">
    <citation type="submission" date="2004-02" db="EMBL/GenBank/DDBJ databases">
        <title>The MYB transcription factor family in Arabidopsis: a genome-wide cloning and expression pattern analysis.</title>
        <authorList>
            <person name="Qu L."/>
            <person name="Gu H."/>
        </authorList>
    </citation>
    <scope>NUCLEOTIDE SEQUENCE [MRNA] (ISOFORM 1)</scope>
</reference>
<reference key="2">
    <citation type="submission" date="2005-04" db="EMBL/GenBank/DDBJ databases">
        <title>A small family of LHY-CCA1-like (LCL) MYB1R transcription factors: potential co-regulators of the circadian oscillator.</title>
        <authorList>
            <person name="Schmied K.C."/>
            <person name="Merkle T."/>
        </authorList>
    </citation>
    <scope>NUCLEOTIDE SEQUENCE [MRNA] (ISOFORM 2)</scope>
</reference>
<reference key="3">
    <citation type="submission" date="1999-04" db="EMBL/GenBank/DDBJ databases">
        <title>Structural analysis of Arabidopsis thaliana chromosome 5. XI.</title>
        <authorList>
            <person name="Kaneko T."/>
            <person name="Katoh T."/>
            <person name="Asamizu E."/>
            <person name="Sato S."/>
            <person name="Nakamura Y."/>
            <person name="Kotani H."/>
            <person name="Tabata S."/>
        </authorList>
    </citation>
    <scope>NUCLEOTIDE SEQUENCE [LARGE SCALE GENOMIC DNA]</scope>
    <source>
        <strain>cv. Columbia</strain>
    </source>
</reference>
<reference key="4">
    <citation type="journal article" date="2017" name="Plant J.">
        <title>Araport11: a complete reannotation of the Arabidopsis thaliana reference genome.</title>
        <authorList>
            <person name="Cheng C.Y."/>
            <person name="Krishnakumar V."/>
            <person name="Chan A.P."/>
            <person name="Thibaud-Nissen F."/>
            <person name="Schobel S."/>
            <person name="Town C.D."/>
        </authorList>
    </citation>
    <scope>GENOME REANNOTATION</scope>
    <source>
        <strain>cv. Columbia</strain>
    </source>
</reference>
<reference key="5">
    <citation type="journal article" date="2003" name="Science">
        <title>Empirical analysis of transcriptional activity in the Arabidopsis genome.</title>
        <authorList>
            <person name="Yamada K."/>
            <person name="Lim J."/>
            <person name="Dale J.M."/>
            <person name="Chen H."/>
            <person name="Shinn P."/>
            <person name="Palm C.J."/>
            <person name="Southwick A.M."/>
            <person name="Wu H.C."/>
            <person name="Kim C.J."/>
            <person name="Nguyen M."/>
            <person name="Pham P.K."/>
            <person name="Cheuk R.F."/>
            <person name="Karlin-Newmann G."/>
            <person name="Liu S.X."/>
            <person name="Lam B."/>
            <person name="Sakano H."/>
            <person name="Wu T."/>
            <person name="Yu G."/>
            <person name="Miranda M."/>
            <person name="Quach H.L."/>
            <person name="Tripp M."/>
            <person name="Chang C.H."/>
            <person name="Lee J.M."/>
            <person name="Toriumi M.J."/>
            <person name="Chan M.M."/>
            <person name="Tang C.C."/>
            <person name="Onodera C.S."/>
            <person name="Deng J.M."/>
            <person name="Akiyama K."/>
            <person name="Ansari Y."/>
            <person name="Arakawa T."/>
            <person name="Banh J."/>
            <person name="Banno F."/>
            <person name="Bowser L."/>
            <person name="Brooks S.Y."/>
            <person name="Carninci P."/>
            <person name="Chao Q."/>
            <person name="Choy N."/>
            <person name="Enju A."/>
            <person name="Goldsmith A.D."/>
            <person name="Gurjal M."/>
            <person name="Hansen N.F."/>
            <person name="Hayashizaki Y."/>
            <person name="Johnson-Hopson C."/>
            <person name="Hsuan V.W."/>
            <person name="Iida K."/>
            <person name="Karnes M."/>
            <person name="Khan S."/>
            <person name="Koesema E."/>
            <person name="Ishida J."/>
            <person name="Jiang P.X."/>
            <person name="Jones T."/>
            <person name="Kawai J."/>
            <person name="Kamiya A."/>
            <person name="Meyers C."/>
            <person name="Nakajima M."/>
            <person name="Narusaka M."/>
            <person name="Seki M."/>
            <person name="Sakurai T."/>
            <person name="Satou M."/>
            <person name="Tamse R."/>
            <person name="Vaysberg M."/>
            <person name="Wallender E.K."/>
            <person name="Wong C."/>
            <person name="Yamamura Y."/>
            <person name="Yuan S."/>
            <person name="Shinozaki K."/>
            <person name="Davis R.W."/>
            <person name="Theologis A."/>
            <person name="Ecker J.R."/>
        </authorList>
    </citation>
    <scope>NUCLEOTIDE SEQUENCE [LARGE SCALE MRNA] (ISOFORM 1)</scope>
    <source>
        <strain>cv. Columbia</strain>
    </source>
</reference>
<reference key="6">
    <citation type="submission" date="2006-06" db="EMBL/GenBank/DDBJ databases">
        <title>Arabidopsis ORF clones.</title>
        <authorList>
            <person name="Quinitio C."/>
            <person name="Chen H."/>
            <person name="Kim C.J."/>
            <person name="Shinn P."/>
            <person name="Ecker J.R."/>
        </authorList>
    </citation>
    <scope>NUCLEOTIDE SEQUENCE [LARGE SCALE MRNA] (ISOFORM 1)</scope>
</reference>
<reference key="7">
    <citation type="submission" date="2002-03" db="EMBL/GenBank/DDBJ databases">
        <title>Full-length cDNA from Arabidopsis thaliana.</title>
        <authorList>
            <person name="Brover V.V."/>
            <person name="Troukhan M.E."/>
            <person name="Alexandrov N.A."/>
            <person name="Lu Y.-P."/>
            <person name="Flavell R.B."/>
            <person name="Feldmann K.A."/>
        </authorList>
    </citation>
    <scope>NUCLEOTIDE SEQUENCE [LARGE SCALE MRNA] (ISOFORM 2)</scope>
</reference>
<reference key="8">
    <citation type="journal article" date="2009" name="Proc. Natl. Acad. Sci. U.S.A.">
        <title>REVEILLE1, a Myb-like transcription factor, integrates the circadian clock and auxin pathways.</title>
        <authorList>
            <person name="Rawat R."/>
            <person name="Schwartz J."/>
            <person name="Jones M.A."/>
            <person name="Sairanen I."/>
            <person name="Cheng Y."/>
            <person name="Andersson C.R."/>
            <person name="Zhao Y."/>
            <person name="Ljung K."/>
            <person name="Harmer S.L."/>
        </authorList>
    </citation>
    <scope>GENE FAMILY</scope>
    <scope>NOMENCLATURE</scope>
</reference>
<reference key="9">
    <citation type="journal article" date="2024" name="Plant Direct">
        <title>Light quality-dependent roles of REVEILLE proteins in the circadian system.</title>
        <authorList>
            <person name="Hughes C.L."/>
            <person name="An Y."/>
            <person name="Maloof J.N."/>
            <person name="Harmer S.L."/>
        </authorList>
    </citation>
    <scope>FUNCTION</scope>
    <scope>DISRUPTION PHENOTYPE</scope>
    <source>
        <strain>cv. Columbia</strain>
    </source>
</reference>
<evidence type="ECO:0000250" key="1">
    <source>
        <dbReference type="UniProtKB" id="Q6R0G4"/>
    </source>
</evidence>
<evidence type="ECO:0000255" key="2">
    <source>
        <dbReference type="PROSITE-ProRule" id="PRU00625"/>
    </source>
</evidence>
<evidence type="ECO:0000256" key="3">
    <source>
        <dbReference type="SAM" id="MobiDB-lite"/>
    </source>
</evidence>
<evidence type="ECO:0000269" key="4">
    <source>
    </source>
</evidence>
<evidence type="ECO:0000303" key="5">
    <source>
    </source>
</evidence>
<evidence type="ECO:0000303" key="6">
    <source ref="2"/>
</evidence>
<evidence type="ECO:0000303" key="7">
    <source ref="7"/>
</evidence>
<evidence type="ECO:0000305" key="8"/>
<evidence type="ECO:0000312" key="9">
    <source>
        <dbReference type="Araport" id="AT5G52660"/>
    </source>
</evidence>
<evidence type="ECO:0000312" key="10">
    <source>
        <dbReference type="EMBL" id="BAA98084.1"/>
    </source>
</evidence>
<accession>Q8H0W3</accession>
<accession>Q8LAP4</accession>
<accession>Q9LTF1</accession>
<keyword id="KW-0025">Alternative splicing</keyword>
<keyword id="KW-0238">DNA-binding</keyword>
<keyword id="KW-0539">Nucleus</keyword>
<keyword id="KW-1185">Reference proteome</keyword>
<keyword id="KW-0804">Transcription</keyword>
<keyword id="KW-0805">Transcription regulation</keyword>
<comment type="function">
    <text evidence="1 4">Probable transcription factor (By similarity). RVE4, RVE6 and RVE8 are components of the circadian system acting synergistically to regulate flowering time, redundantly to regulate leaf growth, and antagonistically to regulate hypocotyl elongation; their action seems independent of ZTL and HY5 (PubMed:38481435).</text>
</comment>
<comment type="subcellular location">
    <subcellularLocation>
        <location evidence="2">Nucleus</location>
    </subcellularLocation>
</comment>
<comment type="alternative products">
    <event type="alternative splicing"/>
    <isoform>
        <id>Q8H0W3-1</id>
        <name>1</name>
        <sequence type="displayed"/>
    </isoform>
    <isoform>
        <id>Q8H0W3-2</id>
        <name>2</name>
        <sequence type="described" ref="VSP_053510"/>
    </isoform>
</comment>
<comment type="disruption phenotype">
    <text evidence="4">Monochromatic blue and red lights have opposite effects on the period of triple mutants rve468 lacking RVE4, RVE6 and RVE8; lack of blue light-specific increase in expression of some circadian clock genes (PubMed:38481435). In long day conditions, rve468 plants have a larger size and a delayed flowering (PubMed:38481435). In short days, rve468 plants exhibit long petioles (PubMed:38481435).</text>
</comment>
<comment type="sequence caution" evidence="8">
    <conflict type="erroneous gene model prediction">
        <sequence resource="EMBL-CDS" id="BAA98084"/>
    </conflict>
</comment>
<dbReference type="EMBL" id="AY550303">
    <property type="protein sequence ID" value="AAS58514.1"/>
    <property type="molecule type" value="mRNA"/>
</dbReference>
<dbReference type="EMBL" id="AJ937210">
    <property type="protein sequence ID" value="CAI77451.1"/>
    <property type="molecule type" value="mRNA"/>
</dbReference>
<dbReference type="EMBL" id="AB025606">
    <property type="protein sequence ID" value="BAA98084.1"/>
    <property type="status" value="ALT_SEQ"/>
    <property type="molecule type" value="Genomic_DNA"/>
</dbReference>
<dbReference type="EMBL" id="CP002688">
    <property type="protein sequence ID" value="AED96246.1"/>
    <property type="molecule type" value="Genomic_DNA"/>
</dbReference>
<dbReference type="EMBL" id="CP002688">
    <property type="protein sequence ID" value="AED96247.1"/>
    <property type="molecule type" value="Genomic_DNA"/>
</dbReference>
<dbReference type="EMBL" id="BT002002">
    <property type="protein sequence ID" value="AAN72013.1"/>
    <property type="molecule type" value="mRNA"/>
</dbReference>
<dbReference type="EMBL" id="BT025882">
    <property type="protein sequence ID" value="ABF85784.1"/>
    <property type="molecule type" value="mRNA"/>
</dbReference>
<dbReference type="EMBL" id="AY087690">
    <property type="protein sequence ID" value="AAM65227.1"/>
    <property type="molecule type" value="mRNA"/>
</dbReference>
<dbReference type="RefSeq" id="NP_568776.2">
    <molecule id="Q8H0W3-1"/>
    <property type="nucleotide sequence ID" value="NM_124644.5"/>
</dbReference>
<dbReference type="RefSeq" id="NP_851177.1">
    <molecule id="Q8H0W3-2"/>
    <property type="nucleotide sequence ID" value="NM_180846.2"/>
</dbReference>
<dbReference type="SMR" id="Q8H0W3"/>
<dbReference type="BioGRID" id="20588">
    <property type="interactions" value="2"/>
</dbReference>
<dbReference type="FunCoup" id="Q8H0W3">
    <property type="interactions" value="261"/>
</dbReference>
<dbReference type="IntAct" id="Q8H0W3">
    <property type="interactions" value="2"/>
</dbReference>
<dbReference type="STRING" id="3702.Q8H0W3"/>
<dbReference type="PaxDb" id="3702-AT5G52660.2"/>
<dbReference type="ProteomicsDB" id="226679">
    <molecule id="Q8H0W3-1"/>
</dbReference>
<dbReference type="EnsemblPlants" id="AT5G52660.1">
    <molecule id="Q8H0W3-2"/>
    <property type="protein sequence ID" value="AT5G52660.1"/>
    <property type="gene ID" value="AT5G52660"/>
</dbReference>
<dbReference type="EnsemblPlants" id="AT5G52660.2">
    <molecule id="Q8H0W3-1"/>
    <property type="protein sequence ID" value="AT5G52660.2"/>
    <property type="gene ID" value="AT5G52660"/>
</dbReference>
<dbReference type="GeneID" id="835343"/>
<dbReference type="Gramene" id="AT5G52660.1">
    <molecule id="Q8H0W3-2"/>
    <property type="protein sequence ID" value="AT5G52660.1"/>
    <property type="gene ID" value="AT5G52660"/>
</dbReference>
<dbReference type="Gramene" id="AT5G52660.2">
    <molecule id="Q8H0W3-1"/>
    <property type="protein sequence ID" value="AT5G52660.2"/>
    <property type="gene ID" value="AT5G52660"/>
</dbReference>
<dbReference type="KEGG" id="ath:AT5G52660"/>
<dbReference type="Araport" id="AT5G52660"/>
<dbReference type="TAIR" id="AT5G52660">
    <property type="gene designation" value="RVE6"/>
</dbReference>
<dbReference type="eggNOG" id="KOG0724">
    <property type="taxonomic scope" value="Eukaryota"/>
</dbReference>
<dbReference type="InParanoid" id="Q8H0W3"/>
<dbReference type="OMA" id="EMEKQCK"/>
<dbReference type="OrthoDB" id="118550at2759"/>
<dbReference type="PhylomeDB" id="Q8H0W3"/>
<dbReference type="PRO" id="PR:Q8H0W3"/>
<dbReference type="Proteomes" id="UP000006548">
    <property type="component" value="Chromosome 5"/>
</dbReference>
<dbReference type="ExpressionAtlas" id="Q8H0W3">
    <property type="expression patterns" value="baseline and differential"/>
</dbReference>
<dbReference type="GO" id="GO:0005634">
    <property type="term" value="C:nucleus"/>
    <property type="evidence" value="ECO:0007669"/>
    <property type="project" value="UniProtKB-SubCell"/>
</dbReference>
<dbReference type="GO" id="GO:0003677">
    <property type="term" value="F:DNA binding"/>
    <property type="evidence" value="ECO:0007669"/>
    <property type="project" value="UniProtKB-KW"/>
</dbReference>
<dbReference type="GO" id="GO:0003700">
    <property type="term" value="F:DNA-binding transcription factor activity"/>
    <property type="evidence" value="ECO:0000250"/>
    <property type="project" value="TAIR"/>
</dbReference>
<dbReference type="GO" id="GO:0032922">
    <property type="term" value="P:circadian regulation of gene expression"/>
    <property type="evidence" value="ECO:0000315"/>
    <property type="project" value="UniProtKB"/>
</dbReference>
<dbReference type="GO" id="GO:0007623">
    <property type="term" value="P:circadian rhythm"/>
    <property type="evidence" value="ECO:0000315"/>
    <property type="project" value="UniProtKB"/>
</dbReference>
<dbReference type="GO" id="GO:0043153">
    <property type="term" value="P:entrainment of circadian clock by photoperiod"/>
    <property type="evidence" value="ECO:0000315"/>
    <property type="project" value="UniProtKB"/>
</dbReference>
<dbReference type="GO" id="GO:0042752">
    <property type="term" value="P:regulation of circadian rhythm"/>
    <property type="evidence" value="ECO:0000316"/>
    <property type="project" value="TAIR"/>
</dbReference>
<dbReference type="GO" id="GO:2000024">
    <property type="term" value="P:regulation of leaf development"/>
    <property type="evidence" value="ECO:0000315"/>
    <property type="project" value="UniProtKB"/>
</dbReference>
<dbReference type="GO" id="GO:0010099">
    <property type="term" value="P:regulation of photomorphogenesis"/>
    <property type="evidence" value="ECO:0000315"/>
    <property type="project" value="UniProtKB"/>
</dbReference>
<dbReference type="GO" id="GO:2000028">
    <property type="term" value="P:regulation of photoperiodism, flowering"/>
    <property type="evidence" value="ECO:0000315"/>
    <property type="project" value="UniProtKB"/>
</dbReference>
<dbReference type="GO" id="GO:0009637">
    <property type="term" value="P:response to blue light"/>
    <property type="evidence" value="ECO:0000315"/>
    <property type="project" value="UniProtKB"/>
</dbReference>
<dbReference type="GO" id="GO:0010114">
    <property type="term" value="P:response to red light"/>
    <property type="evidence" value="ECO:0000315"/>
    <property type="project" value="UniProtKB"/>
</dbReference>
<dbReference type="CDD" id="cd00167">
    <property type="entry name" value="SANT"/>
    <property type="match status" value="1"/>
</dbReference>
<dbReference type="FunFam" id="1.10.10.60:FF:000023">
    <property type="entry name" value="protein REVEILLE 6 isoform X1"/>
    <property type="match status" value="1"/>
</dbReference>
<dbReference type="Gene3D" id="1.10.10.60">
    <property type="entry name" value="Homeodomain-like"/>
    <property type="match status" value="1"/>
</dbReference>
<dbReference type="InterPro" id="IPR009057">
    <property type="entry name" value="Homeodomain-like_sf"/>
</dbReference>
<dbReference type="InterPro" id="IPR017930">
    <property type="entry name" value="Myb_dom"/>
</dbReference>
<dbReference type="InterPro" id="IPR006447">
    <property type="entry name" value="Myb_dom_plants"/>
</dbReference>
<dbReference type="InterPro" id="IPR001005">
    <property type="entry name" value="SANT/Myb"/>
</dbReference>
<dbReference type="InterPro" id="IPR017884">
    <property type="entry name" value="SANT_dom"/>
</dbReference>
<dbReference type="NCBIfam" id="TIGR01557">
    <property type="entry name" value="myb_SHAQKYF"/>
    <property type="match status" value="1"/>
</dbReference>
<dbReference type="PANTHER" id="PTHR12802:SF103">
    <property type="entry name" value="PROTEIN REVEILLE 6"/>
    <property type="match status" value="1"/>
</dbReference>
<dbReference type="PANTHER" id="PTHR12802">
    <property type="entry name" value="SWI/SNF COMPLEX-RELATED"/>
    <property type="match status" value="1"/>
</dbReference>
<dbReference type="Pfam" id="PF00249">
    <property type="entry name" value="Myb_DNA-binding"/>
    <property type="match status" value="1"/>
</dbReference>
<dbReference type="Pfam" id="PF24904">
    <property type="entry name" value="RVE6"/>
    <property type="match status" value="1"/>
</dbReference>
<dbReference type="SMART" id="SM00717">
    <property type="entry name" value="SANT"/>
    <property type="match status" value="1"/>
</dbReference>
<dbReference type="SUPFAM" id="SSF46689">
    <property type="entry name" value="Homeodomain-like"/>
    <property type="match status" value="1"/>
</dbReference>
<dbReference type="PROSITE" id="PS51294">
    <property type="entry name" value="HTH_MYB"/>
    <property type="match status" value="1"/>
</dbReference>